<gene>
    <name evidence="1" type="primary">azoR</name>
    <name type="ordered locus">Rfer_0809</name>
</gene>
<accession>Q220J4</accession>
<name>AZOR_ALBFT</name>
<sequence length="203" mass="21732">MKLLHVDSSILGTYSVSRQLSAEIVAEWRKSRPDTTVEYLDLALNAPNHFGADAIAIKGIAQPEPTEAQRAENALSEQLVSQFLASDVIVIGAPFYNFSIPTQLKAWIDRLAQPGRTFTYNEKGPLGLATGKTVIVASTRGGAYSTSEGGQAMEHQESYLKVVFGFFGITDVRIVRAEGLAMGDAPKAAALSAARADMELATA</sequence>
<keyword id="KW-0285">Flavoprotein</keyword>
<keyword id="KW-0288">FMN</keyword>
<keyword id="KW-0520">NAD</keyword>
<keyword id="KW-0560">Oxidoreductase</keyword>
<keyword id="KW-1185">Reference proteome</keyword>
<comment type="function">
    <text evidence="1">Quinone reductase that provides resistance to thiol-specific stress caused by electrophilic quinones.</text>
</comment>
<comment type="function">
    <text evidence="1">Also exhibits azoreductase activity. Catalyzes the reductive cleavage of the azo bond in aromatic azo compounds to the corresponding amines.</text>
</comment>
<comment type="catalytic activity">
    <reaction evidence="1">
        <text>2 a quinone + NADH + H(+) = 2 a 1,4-benzosemiquinone + NAD(+)</text>
        <dbReference type="Rhea" id="RHEA:65952"/>
        <dbReference type="ChEBI" id="CHEBI:15378"/>
        <dbReference type="ChEBI" id="CHEBI:57540"/>
        <dbReference type="ChEBI" id="CHEBI:57945"/>
        <dbReference type="ChEBI" id="CHEBI:132124"/>
        <dbReference type="ChEBI" id="CHEBI:134225"/>
    </reaction>
</comment>
<comment type="catalytic activity">
    <reaction evidence="1">
        <text>N,N-dimethyl-1,4-phenylenediamine + anthranilate + 2 NAD(+) = 2-(4-dimethylaminophenyl)diazenylbenzoate + 2 NADH + 2 H(+)</text>
        <dbReference type="Rhea" id="RHEA:55872"/>
        <dbReference type="ChEBI" id="CHEBI:15378"/>
        <dbReference type="ChEBI" id="CHEBI:15783"/>
        <dbReference type="ChEBI" id="CHEBI:16567"/>
        <dbReference type="ChEBI" id="CHEBI:57540"/>
        <dbReference type="ChEBI" id="CHEBI:57945"/>
        <dbReference type="ChEBI" id="CHEBI:71579"/>
        <dbReference type="EC" id="1.7.1.17"/>
    </reaction>
</comment>
<comment type="cofactor">
    <cofactor evidence="1">
        <name>FMN</name>
        <dbReference type="ChEBI" id="CHEBI:58210"/>
    </cofactor>
    <text evidence="1">Binds 1 FMN per subunit.</text>
</comment>
<comment type="subunit">
    <text evidence="1">Homodimer.</text>
</comment>
<comment type="similarity">
    <text evidence="1">Belongs to the azoreductase type 1 family.</text>
</comment>
<protein>
    <recommendedName>
        <fullName evidence="1">FMN-dependent NADH:quinone oxidoreductase</fullName>
        <ecNumber evidence="1">1.6.5.-</ecNumber>
    </recommendedName>
    <alternativeName>
        <fullName evidence="1">Azo-dye reductase</fullName>
    </alternativeName>
    <alternativeName>
        <fullName evidence="1">FMN-dependent NADH-azo compound oxidoreductase</fullName>
    </alternativeName>
    <alternativeName>
        <fullName evidence="1">FMN-dependent NADH-azoreductase</fullName>
        <ecNumber evidence="1">1.7.1.17</ecNumber>
    </alternativeName>
</protein>
<proteinExistence type="inferred from homology"/>
<dbReference type="EC" id="1.6.5.-" evidence="1"/>
<dbReference type="EC" id="1.7.1.17" evidence="1"/>
<dbReference type="EMBL" id="CP000267">
    <property type="protein sequence ID" value="ABD68559.1"/>
    <property type="molecule type" value="Genomic_DNA"/>
</dbReference>
<dbReference type="RefSeq" id="WP_011463132.1">
    <property type="nucleotide sequence ID" value="NC_007908.1"/>
</dbReference>
<dbReference type="SMR" id="Q220J4"/>
<dbReference type="STRING" id="338969.Rfer_0809"/>
<dbReference type="KEGG" id="rfr:Rfer_0809"/>
<dbReference type="eggNOG" id="COG1182">
    <property type="taxonomic scope" value="Bacteria"/>
</dbReference>
<dbReference type="HOGENOM" id="CLU_088964_0_0_4"/>
<dbReference type="OrthoDB" id="9787136at2"/>
<dbReference type="Proteomes" id="UP000008332">
    <property type="component" value="Chromosome"/>
</dbReference>
<dbReference type="GO" id="GO:0009055">
    <property type="term" value="F:electron transfer activity"/>
    <property type="evidence" value="ECO:0007669"/>
    <property type="project" value="UniProtKB-UniRule"/>
</dbReference>
<dbReference type="GO" id="GO:0010181">
    <property type="term" value="F:FMN binding"/>
    <property type="evidence" value="ECO:0007669"/>
    <property type="project" value="UniProtKB-UniRule"/>
</dbReference>
<dbReference type="GO" id="GO:0016652">
    <property type="term" value="F:oxidoreductase activity, acting on NAD(P)H as acceptor"/>
    <property type="evidence" value="ECO:0007669"/>
    <property type="project" value="UniProtKB-UniRule"/>
</dbReference>
<dbReference type="GO" id="GO:0016655">
    <property type="term" value="F:oxidoreductase activity, acting on NAD(P)H, quinone or similar compound as acceptor"/>
    <property type="evidence" value="ECO:0007669"/>
    <property type="project" value="InterPro"/>
</dbReference>
<dbReference type="Gene3D" id="3.40.50.360">
    <property type="match status" value="1"/>
</dbReference>
<dbReference type="HAMAP" id="MF_01216">
    <property type="entry name" value="Azoreductase_type1"/>
    <property type="match status" value="1"/>
</dbReference>
<dbReference type="InterPro" id="IPR003680">
    <property type="entry name" value="Flavodoxin_fold"/>
</dbReference>
<dbReference type="InterPro" id="IPR029039">
    <property type="entry name" value="Flavoprotein-like_sf"/>
</dbReference>
<dbReference type="InterPro" id="IPR050104">
    <property type="entry name" value="FMN-dep_NADH:Q_OxRdtase_AzoR1"/>
</dbReference>
<dbReference type="InterPro" id="IPR023048">
    <property type="entry name" value="NADH:quinone_OxRdtase_FMN_depd"/>
</dbReference>
<dbReference type="PANTHER" id="PTHR43741">
    <property type="entry name" value="FMN-DEPENDENT NADH-AZOREDUCTASE 1"/>
    <property type="match status" value="1"/>
</dbReference>
<dbReference type="PANTHER" id="PTHR43741:SF4">
    <property type="entry name" value="FMN-DEPENDENT NADH:QUINONE OXIDOREDUCTASE"/>
    <property type="match status" value="1"/>
</dbReference>
<dbReference type="Pfam" id="PF02525">
    <property type="entry name" value="Flavodoxin_2"/>
    <property type="match status" value="1"/>
</dbReference>
<dbReference type="SUPFAM" id="SSF52218">
    <property type="entry name" value="Flavoproteins"/>
    <property type="match status" value="1"/>
</dbReference>
<reference key="1">
    <citation type="submission" date="2006-02" db="EMBL/GenBank/DDBJ databases">
        <title>Complete sequence of chromosome of Rhodoferax ferrireducens DSM 15236.</title>
        <authorList>
            <person name="Copeland A."/>
            <person name="Lucas S."/>
            <person name="Lapidus A."/>
            <person name="Barry K."/>
            <person name="Detter J.C."/>
            <person name="Glavina del Rio T."/>
            <person name="Hammon N."/>
            <person name="Israni S."/>
            <person name="Pitluck S."/>
            <person name="Brettin T."/>
            <person name="Bruce D."/>
            <person name="Han C."/>
            <person name="Tapia R."/>
            <person name="Gilna P."/>
            <person name="Kiss H."/>
            <person name="Schmutz J."/>
            <person name="Larimer F."/>
            <person name="Land M."/>
            <person name="Kyrpides N."/>
            <person name="Ivanova N."/>
            <person name="Richardson P."/>
        </authorList>
    </citation>
    <scope>NUCLEOTIDE SEQUENCE [LARGE SCALE GENOMIC DNA]</scope>
    <source>
        <strain>ATCC BAA-621 / DSM 15236 / T118</strain>
    </source>
</reference>
<organism>
    <name type="scientific">Albidiferax ferrireducens (strain ATCC BAA-621 / DSM 15236 / T118)</name>
    <name type="common">Rhodoferax ferrireducens</name>
    <dbReference type="NCBI Taxonomy" id="338969"/>
    <lineage>
        <taxon>Bacteria</taxon>
        <taxon>Pseudomonadati</taxon>
        <taxon>Pseudomonadota</taxon>
        <taxon>Betaproteobacteria</taxon>
        <taxon>Burkholderiales</taxon>
        <taxon>Comamonadaceae</taxon>
        <taxon>Rhodoferax</taxon>
    </lineage>
</organism>
<feature type="chain" id="PRO_0000245964" description="FMN-dependent NADH:quinone oxidoreductase">
    <location>
        <begin position="1"/>
        <end position="203"/>
    </location>
</feature>
<feature type="binding site" evidence="1">
    <location>
        <position position="9"/>
    </location>
    <ligand>
        <name>FMN</name>
        <dbReference type="ChEBI" id="CHEBI:58210"/>
    </ligand>
</feature>
<feature type="binding site" evidence="1">
    <location>
        <begin position="15"/>
        <end position="17"/>
    </location>
    <ligand>
        <name>FMN</name>
        <dbReference type="ChEBI" id="CHEBI:58210"/>
    </ligand>
</feature>
<feature type="binding site" evidence="1">
    <location>
        <begin position="139"/>
        <end position="142"/>
    </location>
    <ligand>
        <name>FMN</name>
        <dbReference type="ChEBI" id="CHEBI:58210"/>
    </ligand>
</feature>
<evidence type="ECO:0000255" key="1">
    <source>
        <dbReference type="HAMAP-Rule" id="MF_01216"/>
    </source>
</evidence>